<name>Y169_PASMU</name>
<gene>
    <name type="ordered locus">PM0169</name>
</gene>
<feature type="chain" id="PRO_0000107739" description="Nucleotide-binding protein PM0169">
    <location>
        <begin position="1"/>
        <end position="288"/>
    </location>
</feature>
<feature type="binding site" evidence="1">
    <location>
        <begin position="8"/>
        <end position="15"/>
    </location>
    <ligand>
        <name>ATP</name>
        <dbReference type="ChEBI" id="CHEBI:30616"/>
    </ligand>
</feature>
<feature type="binding site" evidence="1">
    <location>
        <begin position="56"/>
        <end position="59"/>
    </location>
    <ligand>
        <name>GTP</name>
        <dbReference type="ChEBI" id="CHEBI:37565"/>
    </ligand>
</feature>
<keyword id="KW-0067">ATP-binding</keyword>
<keyword id="KW-0342">GTP-binding</keyword>
<keyword id="KW-0547">Nucleotide-binding</keyword>
<keyword id="KW-1185">Reference proteome</keyword>
<protein>
    <recommendedName>
        <fullName evidence="1">Nucleotide-binding protein PM0169</fullName>
    </recommendedName>
</protein>
<proteinExistence type="inferred from homology"/>
<organism>
    <name type="scientific">Pasteurella multocida (strain Pm70)</name>
    <dbReference type="NCBI Taxonomy" id="272843"/>
    <lineage>
        <taxon>Bacteria</taxon>
        <taxon>Pseudomonadati</taxon>
        <taxon>Pseudomonadota</taxon>
        <taxon>Gammaproteobacteria</taxon>
        <taxon>Pasteurellales</taxon>
        <taxon>Pasteurellaceae</taxon>
        <taxon>Pasteurella</taxon>
    </lineage>
</organism>
<comment type="function">
    <text evidence="1">Displays ATPase and GTPase activities.</text>
</comment>
<comment type="similarity">
    <text evidence="1">Belongs to the RapZ-like family.</text>
</comment>
<dbReference type="EMBL" id="AE004439">
    <property type="protein sequence ID" value="AAK02253.1"/>
    <property type="molecule type" value="Genomic_DNA"/>
</dbReference>
<dbReference type="SMR" id="Q9CP85"/>
<dbReference type="STRING" id="272843.PM0169"/>
<dbReference type="EnsemblBacteria" id="AAK02253">
    <property type="protein sequence ID" value="AAK02253"/>
    <property type="gene ID" value="PM0169"/>
</dbReference>
<dbReference type="KEGG" id="pmu:PM0169"/>
<dbReference type="HOGENOM" id="CLU_059558_1_1_6"/>
<dbReference type="OrthoDB" id="9784461at2"/>
<dbReference type="Proteomes" id="UP000000809">
    <property type="component" value="Chromosome"/>
</dbReference>
<dbReference type="GO" id="GO:0005524">
    <property type="term" value="F:ATP binding"/>
    <property type="evidence" value="ECO:0007669"/>
    <property type="project" value="UniProtKB-UniRule"/>
</dbReference>
<dbReference type="GO" id="GO:0005525">
    <property type="term" value="F:GTP binding"/>
    <property type="evidence" value="ECO:0007669"/>
    <property type="project" value="UniProtKB-UniRule"/>
</dbReference>
<dbReference type="Gene3D" id="3.40.50.300">
    <property type="entry name" value="P-loop containing nucleotide triphosphate hydrolases"/>
    <property type="match status" value="1"/>
</dbReference>
<dbReference type="HAMAP" id="MF_00636">
    <property type="entry name" value="RapZ_like"/>
    <property type="match status" value="1"/>
</dbReference>
<dbReference type="InterPro" id="IPR027417">
    <property type="entry name" value="P-loop_NTPase"/>
</dbReference>
<dbReference type="InterPro" id="IPR005337">
    <property type="entry name" value="RapZ-like"/>
</dbReference>
<dbReference type="InterPro" id="IPR053930">
    <property type="entry name" value="RapZ-like_N"/>
</dbReference>
<dbReference type="InterPro" id="IPR053931">
    <property type="entry name" value="RapZ_C"/>
</dbReference>
<dbReference type="NCBIfam" id="NF003828">
    <property type="entry name" value="PRK05416.1"/>
    <property type="match status" value="1"/>
</dbReference>
<dbReference type="PANTHER" id="PTHR30448">
    <property type="entry name" value="RNASE ADAPTER PROTEIN RAPZ"/>
    <property type="match status" value="1"/>
</dbReference>
<dbReference type="PANTHER" id="PTHR30448:SF0">
    <property type="entry name" value="RNASE ADAPTER PROTEIN RAPZ"/>
    <property type="match status" value="1"/>
</dbReference>
<dbReference type="Pfam" id="PF22740">
    <property type="entry name" value="PapZ_C"/>
    <property type="match status" value="1"/>
</dbReference>
<dbReference type="Pfam" id="PF03668">
    <property type="entry name" value="RapZ-like_N"/>
    <property type="match status" value="1"/>
</dbReference>
<dbReference type="PIRSF" id="PIRSF005052">
    <property type="entry name" value="P-loopkin"/>
    <property type="match status" value="1"/>
</dbReference>
<dbReference type="SUPFAM" id="SSF52540">
    <property type="entry name" value="P-loop containing nucleoside triphosphate hydrolases"/>
    <property type="match status" value="1"/>
</dbReference>
<evidence type="ECO:0000255" key="1">
    <source>
        <dbReference type="HAMAP-Rule" id="MF_00636"/>
    </source>
</evidence>
<sequence>MEIIIISGHSGAGKSVALRCLEDIGYYCVDNLPLDLLPQLASILSTNQQSVAISLDIRNLPHSSKTLENLLTEVQQQHQIKLIFLDADRGTLIRRYSDSRRLHPLSTQDLSLEAAIDAERKYLDPLTQHADLIIDTTRLSTHELAERLRDFLCEKSDKALKIIFQSFGFKYGLPLDADYVFDVRFLPNPHWIPELRPLTGLDAPVAEFLNKQNEVNHFIYLTRNYIETWLPMLEQNNRSYLTIAIGCTGGKHRSVYITEQLGEYFQAKGKNVQIQHKSLAKHKKANTQ</sequence>
<accession>Q9CP85</accession>
<reference key="1">
    <citation type="journal article" date="2001" name="Proc. Natl. Acad. Sci. U.S.A.">
        <title>Complete genomic sequence of Pasteurella multocida Pm70.</title>
        <authorList>
            <person name="May B.J."/>
            <person name="Zhang Q."/>
            <person name="Li L.L."/>
            <person name="Paustian M.L."/>
            <person name="Whittam T.S."/>
            <person name="Kapur V."/>
        </authorList>
    </citation>
    <scope>NUCLEOTIDE SEQUENCE [LARGE SCALE GENOMIC DNA]</scope>
    <source>
        <strain>Pm70</strain>
    </source>
</reference>